<feature type="chain" id="PRO_0000218397" description="Early upstream open reading frame">
    <location>
        <begin position="1"/>
        <end position="182"/>
    </location>
</feature>
<dbReference type="EMBL" id="L13598">
    <property type="protein sequence ID" value="AAA23124.1"/>
    <property type="molecule type" value="Genomic_DNA"/>
</dbReference>
<dbReference type="EMBL" id="CP002549">
    <property type="protein sequence ID" value="ADZ18694.1"/>
    <property type="molecule type" value="Genomic_DNA"/>
</dbReference>
<dbReference type="EMBL" id="CP002586">
    <property type="protein sequence ID" value="AEB55210.1"/>
    <property type="molecule type" value="Genomic_DNA"/>
</dbReference>
<dbReference type="PIR" id="C36909">
    <property type="entry name" value="C36909"/>
</dbReference>
<dbReference type="RefSeq" id="WP_006342858.1">
    <property type="nucleotide sequence ID" value="NC_017287.1"/>
</dbReference>
<dbReference type="GeneID" id="12242466"/>
<dbReference type="KEGG" id="chb:G5O_0207"/>
<dbReference type="KEGG" id="chp:CPSIT_0205"/>
<dbReference type="PATRIC" id="fig|331636.3.peg.192"/>
<dbReference type="HOGENOM" id="CLU_138391_0_0_0"/>
<dbReference type="InterPro" id="IPR041657">
    <property type="entry name" value="HTH_17"/>
</dbReference>
<dbReference type="Pfam" id="PF12728">
    <property type="entry name" value="HTH_17"/>
    <property type="match status" value="2"/>
</dbReference>
<name>EUO_CHLP6</name>
<proteinExistence type="evidence at transcript level"/>
<organism>
    <name type="scientific">Chlamydophila psittaci (strain ATCC VR-125 / 6BC)</name>
    <name type="common">Chlamydia psittaci</name>
    <dbReference type="NCBI Taxonomy" id="331636"/>
    <lineage>
        <taxon>Bacteria</taxon>
        <taxon>Pseudomonadati</taxon>
        <taxon>Chlamydiota</taxon>
        <taxon>Chlamydiia</taxon>
        <taxon>Chlamydiales</taxon>
        <taxon>Chlamydiaceae</taxon>
        <taxon>Chlamydia/Chlamydophila group</taxon>
        <taxon>Chlamydia</taxon>
    </lineage>
</organism>
<evidence type="ECO:0000305" key="1"/>
<comment type="developmental stage">
    <text>Preferentially transcribed early during the life cycle.</text>
</comment>
<comment type="similarity">
    <text evidence="1">Belongs to the EUO family.</text>
</comment>
<sequence length="182" mass="20965">MECIQHESCFDVDDREDAQQIKEQEGTEMVSITQAAKLHNVTRQAIYVAIKQKKLKASKTTRWEIDLKDLEDYKRNRYSRKKSLYQGELLFDNEKGCYSVNQVADMLGIPVQKVYYATRTGTMRGERKGAAWVISQSEIDRYKSEYLNKQTAKKAKGVTVVEHAIAKPEETVSSETLLFENN</sequence>
<protein>
    <recommendedName>
        <fullName>Early upstream open reading frame</fullName>
        <shortName>EUO</shortName>
    </recommendedName>
</protein>
<gene>
    <name type="ordered locus">CPSIT_0205</name>
    <name type="ordered locus">G5O_0207</name>
</gene>
<accession>Q06566</accession>
<accession>F0T374</accession>
<reference key="1">
    <citation type="journal article" date="1993" name="J. Bacteriol.">
        <title>Identification of an early-stage gene of Chlamydia psittaci 6BC.</title>
        <authorList>
            <person name="Wichlan D.W."/>
            <person name="Hatch T.P."/>
        </authorList>
    </citation>
    <scope>NUCLEOTIDE SEQUENCE [GENOMIC DNA]</scope>
    <source>
        <strain>ATCC VR-125 / 6BC</strain>
    </source>
</reference>
<reference key="2">
    <citation type="journal article" date="2011" name="J. Bacteriol.">
        <title>Full-length de novo sequence of the Chlamydophila psittaci type strain, 6BC.</title>
        <authorList>
            <person name="Voigt A."/>
            <person name="Schofl G."/>
            <person name="Heidrich A."/>
            <person name="Sachse K."/>
            <person name="Saluz H.P."/>
        </authorList>
    </citation>
    <scope>NUCLEOTIDE SEQUENCE [LARGE SCALE GENOMIC DNA]</scope>
    <source>
        <strain>ATCC VR-125 / 6BC</strain>
    </source>
</reference>
<reference key="3">
    <citation type="journal article" date="2011" name="J. Bacteriol.">
        <title>Genome sequences of the zoonotic pathogens Chlamydia psittaci 6BC and Cal10.</title>
        <authorList>
            <person name="Grinblat-Huse V."/>
            <person name="Drabek E.F."/>
            <person name="Creasy H.H."/>
            <person name="Daugherty S.C."/>
            <person name="Jones K.M."/>
            <person name="Santana-Cruz I."/>
            <person name="Tallon L.J."/>
            <person name="Read T.D."/>
            <person name="Hatch T.P."/>
            <person name="Bavoil P."/>
            <person name="Myers G.S."/>
        </authorList>
    </citation>
    <scope>NUCLEOTIDE SEQUENCE [LARGE SCALE GENOMIC DNA]</scope>
    <source>
        <strain>ATCC VR-125 / 6BC</strain>
    </source>
</reference>